<evidence type="ECO:0000250" key="1"/>
<evidence type="ECO:0000255" key="2"/>
<evidence type="ECO:0000305" key="3"/>
<feature type="chain" id="PRO_0000211254" description="Paramyosin">
    <location>
        <begin position="1" status="less than"/>
        <end position="638" status="greater than"/>
    </location>
</feature>
<feature type="coiled-coil region" evidence="2">
    <location>
        <begin position="1" status="less than"/>
        <end position="638" status="greater than"/>
    </location>
</feature>
<feature type="non-terminal residue">
    <location>
        <position position="1"/>
    </location>
</feature>
<feature type="non-terminal residue">
    <location>
        <position position="638"/>
    </location>
</feature>
<protein>
    <recommendedName>
        <fullName>Paramyosin</fullName>
    </recommendedName>
</protein>
<name>MYSP_OPIFE</name>
<accession>Q9BMQ6</accession>
<reference key="1">
    <citation type="submission" date="2001-01" db="EMBL/GenBank/DDBJ databases">
        <title>Phylogenetic analysis of Opisthorchis felineus paramyosin gene reveals almost equal distance of this species from Trematoda and Cestoda classes.</title>
        <authorList>
            <person name="Shustov A.V."/>
            <person name="Sorokin A.V."/>
            <person name="Ternovoi V.A."/>
            <person name="Kotelkin A.T."/>
            <person name="Loktev V.B."/>
        </authorList>
    </citation>
    <scope>NUCLEOTIDE SEQUENCE [MRNA]</scope>
</reference>
<organism>
    <name type="scientific">Opisthorchis felineus</name>
    <dbReference type="NCBI Taxonomy" id="147828"/>
    <lineage>
        <taxon>Eukaryota</taxon>
        <taxon>Metazoa</taxon>
        <taxon>Spiralia</taxon>
        <taxon>Lophotrochozoa</taxon>
        <taxon>Platyhelminthes</taxon>
        <taxon>Trematoda</taxon>
        <taxon>Digenea</taxon>
        <taxon>Opisthorchiida</taxon>
        <taxon>Opisthorchiata</taxon>
        <taxon>Opisthorchiidae</taxon>
        <taxon>Opisthorchis</taxon>
    </lineage>
</organism>
<keyword id="KW-0175">Coiled coil</keyword>
<keyword id="KW-0963">Cytoplasm</keyword>
<keyword id="KW-0505">Motor protein</keyword>
<keyword id="KW-0514">Muscle protein</keyword>
<keyword id="KW-0518">Myosin</keyword>
<keyword id="KW-0787">Thick filament</keyword>
<dbReference type="EMBL" id="AF311774">
    <property type="protein sequence ID" value="AAK14176.1"/>
    <property type="molecule type" value="mRNA"/>
</dbReference>
<dbReference type="SMR" id="Q9BMQ6"/>
<dbReference type="GO" id="GO:0005923">
    <property type="term" value="C:bicellular tight junction"/>
    <property type="evidence" value="ECO:0007669"/>
    <property type="project" value="TreeGrafter"/>
</dbReference>
<dbReference type="GO" id="GO:0030016">
    <property type="term" value="C:myofibril"/>
    <property type="evidence" value="ECO:0007669"/>
    <property type="project" value="UniProtKB-SubCell"/>
</dbReference>
<dbReference type="GO" id="GO:0016459">
    <property type="term" value="C:myosin complex"/>
    <property type="evidence" value="ECO:0007669"/>
    <property type="project" value="UniProtKB-KW"/>
</dbReference>
<dbReference type="GO" id="GO:0032982">
    <property type="term" value="C:myosin filament"/>
    <property type="evidence" value="ECO:0007669"/>
    <property type="project" value="UniProtKB-KW"/>
</dbReference>
<dbReference type="GO" id="GO:0008017">
    <property type="term" value="F:microtubule binding"/>
    <property type="evidence" value="ECO:0007669"/>
    <property type="project" value="TreeGrafter"/>
</dbReference>
<dbReference type="GO" id="GO:0000226">
    <property type="term" value="P:microtubule cytoskeleton organization"/>
    <property type="evidence" value="ECO:0007669"/>
    <property type="project" value="TreeGrafter"/>
</dbReference>
<dbReference type="Gene3D" id="1.20.5.340">
    <property type="match status" value="4"/>
</dbReference>
<dbReference type="Gene3D" id="1.20.5.370">
    <property type="match status" value="1"/>
</dbReference>
<dbReference type="Gene3D" id="1.20.5.1160">
    <property type="entry name" value="Vasodilator-stimulated phosphoprotein"/>
    <property type="match status" value="1"/>
</dbReference>
<dbReference type="InterPro" id="IPR002928">
    <property type="entry name" value="Myosin_tail"/>
</dbReference>
<dbReference type="InterPro" id="IPR014751">
    <property type="entry name" value="XRCC4-like_C"/>
</dbReference>
<dbReference type="PANTHER" id="PTHR46349:SF4">
    <property type="entry name" value="CINGULIN"/>
    <property type="match status" value="1"/>
</dbReference>
<dbReference type="PANTHER" id="PTHR46349">
    <property type="entry name" value="CINGULIN-LIKE PROTEIN 1-RELATED"/>
    <property type="match status" value="1"/>
</dbReference>
<dbReference type="Pfam" id="PF01576">
    <property type="entry name" value="Myosin_tail_1"/>
    <property type="match status" value="1"/>
</dbReference>
<dbReference type="SUPFAM" id="SSF90257">
    <property type="entry name" value="Myosin rod fragments"/>
    <property type="match status" value="2"/>
</dbReference>
<dbReference type="SUPFAM" id="SSF57997">
    <property type="entry name" value="Tropomyosin"/>
    <property type="match status" value="1"/>
</dbReference>
<proteinExistence type="evidence at transcript level"/>
<comment type="function">
    <text>Paramyosin is a major structural component of many thick filaments isolated from invertebrate muscles.</text>
</comment>
<comment type="subunit">
    <text evidence="1">Homodimer.</text>
</comment>
<comment type="subcellular location">
    <subcellularLocation>
        <location>Cytoplasm</location>
        <location>Myofibril</location>
    </subcellularLocation>
    <text>Thick filaments of the myofibrils.</text>
</comment>
<comment type="similarity">
    <text evidence="3">Belongs to the paramyosin family.</text>
</comment>
<sequence>FSPSTTRLESRVRELEDMLDLERDARVRAERHAADMSFQVDALSERLDEAGGNSSQTHELLKRREMEIGKLRKDLENANASLEMAETSMRRRHQTALNELAAEVENLQKQKGKAEKDKNSLIMEVGNVLGQLDGALKAKQSAESKLEGLDAQLNRLKGLTDDLQRQLNDLNAAKARLTSENFELLHANQEYEAQVLNLSKSRSSLESAVDDLKRSLDDEAKSRFNLQAQLTSLQMDYDNLQAKYEEESEEASNLRNQVSKFNADLAAMKSKFERELMSKTEEYEELKRKLTLRITELEDTAERERARASNLEKIKAKLTIEIKDLQNEVDSLSAENAELARRAKAAENLANDLQRRVDELTIEINNLHSQNSQLEAENMRLKSQVNDLVDKNAALDRENRQLSDQVKDLKSTLRDANRRLTDLEALRSQLEAERDNLASALHDAEEALREVDQKYQNAQAALNHLKSEMEQRLREKDEELETLRKSTTRTIEELTVTITEMEVKYKSELSRLKKRYESNIAELELQLDTANKANANLMKENKTLAQRVKDLEAFLEEERRLREAAESNLQASERKRIQLSSEVEELRGALEAADRARKHAENEMNEAQTRVSELTMQVNTLTNDKRRLEGDISVMQAD</sequence>